<protein>
    <recommendedName>
        <fullName evidence="1">Large ribosomal subunit protein uL3</fullName>
    </recommendedName>
    <alternativeName>
        <fullName evidence="2">50S ribosomal protein L3</fullName>
    </alternativeName>
</protein>
<comment type="function">
    <text evidence="1">One of the primary rRNA binding proteins, it binds directly near the 3'-end of the 23S rRNA, where it nucleates assembly of the 50S subunit.</text>
</comment>
<comment type="subunit">
    <text evidence="1">Part of the 50S ribosomal subunit. Forms a cluster with proteins L14 and L19.</text>
</comment>
<comment type="PTM">
    <text evidence="1">Methylated by PrmB.</text>
</comment>
<comment type="similarity">
    <text evidence="1">Belongs to the universal ribosomal protein uL3 family.</text>
</comment>
<organism>
    <name type="scientific">Gluconobacter oxydans (strain 621H)</name>
    <name type="common">Gluconobacter suboxydans</name>
    <dbReference type="NCBI Taxonomy" id="290633"/>
    <lineage>
        <taxon>Bacteria</taxon>
        <taxon>Pseudomonadati</taxon>
        <taxon>Pseudomonadota</taxon>
        <taxon>Alphaproteobacteria</taxon>
        <taxon>Acetobacterales</taxon>
        <taxon>Acetobacteraceae</taxon>
        <taxon>Gluconobacter</taxon>
    </lineage>
</organism>
<dbReference type="EMBL" id="CP000009">
    <property type="protein sequence ID" value="AAW60163.1"/>
    <property type="molecule type" value="Genomic_DNA"/>
</dbReference>
<dbReference type="RefSeq" id="WP_011251966.1">
    <property type="nucleotide sequence ID" value="NC_006677.1"/>
</dbReference>
<dbReference type="SMR" id="Q5FTY3"/>
<dbReference type="STRING" id="290633.GOX0380"/>
<dbReference type="KEGG" id="gox:GOX0380"/>
<dbReference type="eggNOG" id="COG0087">
    <property type="taxonomic scope" value="Bacteria"/>
</dbReference>
<dbReference type="HOGENOM" id="CLU_044142_2_0_5"/>
<dbReference type="Proteomes" id="UP000006375">
    <property type="component" value="Chromosome"/>
</dbReference>
<dbReference type="GO" id="GO:0022625">
    <property type="term" value="C:cytosolic large ribosomal subunit"/>
    <property type="evidence" value="ECO:0007669"/>
    <property type="project" value="TreeGrafter"/>
</dbReference>
<dbReference type="GO" id="GO:0019843">
    <property type="term" value="F:rRNA binding"/>
    <property type="evidence" value="ECO:0007669"/>
    <property type="project" value="UniProtKB-UniRule"/>
</dbReference>
<dbReference type="GO" id="GO:0003735">
    <property type="term" value="F:structural constituent of ribosome"/>
    <property type="evidence" value="ECO:0007669"/>
    <property type="project" value="InterPro"/>
</dbReference>
<dbReference type="GO" id="GO:0006412">
    <property type="term" value="P:translation"/>
    <property type="evidence" value="ECO:0007669"/>
    <property type="project" value="UniProtKB-UniRule"/>
</dbReference>
<dbReference type="FunFam" id="2.40.30.10:FF:000004">
    <property type="entry name" value="50S ribosomal protein L3"/>
    <property type="match status" value="1"/>
</dbReference>
<dbReference type="FunFam" id="3.30.160.810:FF:000001">
    <property type="entry name" value="50S ribosomal protein L3"/>
    <property type="match status" value="1"/>
</dbReference>
<dbReference type="Gene3D" id="3.30.160.810">
    <property type="match status" value="1"/>
</dbReference>
<dbReference type="Gene3D" id="2.40.30.10">
    <property type="entry name" value="Translation factors"/>
    <property type="match status" value="1"/>
</dbReference>
<dbReference type="HAMAP" id="MF_01325_B">
    <property type="entry name" value="Ribosomal_uL3_B"/>
    <property type="match status" value="1"/>
</dbReference>
<dbReference type="InterPro" id="IPR000597">
    <property type="entry name" value="Ribosomal_uL3"/>
</dbReference>
<dbReference type="InterPro" id="IPR019927">
    <property type="entry name" value="Ribosomal_uL3_bac/org-type"/>
</dbReference>
<dbReference type="InterPro" id="IPR019926">
    <property type="entry name" value="Ribosomal_uL3_CS"/>
</dbReference>
<dbReference type="InterPro" id="IPR009000">
    <property type="entry name" value="Transl_B-barrel_sf"/>
</dbReference>
<dbReference type="NCBIfam" id="TIGR03625">
    <property type="entry name" value="L3_bact"/>
    <property type="match status" value="1"/>
</dbReference>
<dbReference type="PANTHER" id="PTHR11229">
    <property type="entry name" value="50S RIBOSOMAL PROTEIN L3"/>
    <property type="match status" value="1"/>
</dbReference>
<dbReference type="PANTHER" id="PTHR11229:SF16">
    <property type="entry name" value="LARGE RIBOSOMAL SUBUNIT PROTEIN UL3C"/>
    <property type="match status" value="1"/>
</dbReference>
<dbReference type="Pfam" id="PF00297">
    <property type="entry name" value="Ribosomal_L3"/>
    <property type="match status" value="1"/>
</dbReference>
<dbReference type="SUPFAM" id="SSF50447">
    <property type="entry name" value="Translation proteins"/>
    <property type="match status" value="1"/>
</dbReference>
<dbReference type="PROSITE" id="PS00474">
    <property type="entry name" value="RIBOSOMAL_L3"/>
    <property type="match status" value="1"/>
</dbReference>
<evidence type="ECO:0000255" key="1">
    <source>
        <dbReference type="HAMAP-Rule" id="MF_01325"/>
    </source>
</evidence>
<evidence type="ECO:0000305" key="2"/>
<sequence>MRTGLIAKKLGMTRLFKEDGTHVPVTVLHLDNVEVVDARTNERDGYTAIQLGLGNAKVKNVTKANRGHFARTKVEPKRHLAEFRVSEDALLEAGTKLSAAHFVVGQKVDVTGQSKGKGFAGVMKRHNFAGLEASHGVSISHRSHGSTGQRQDPGKVFKGKKMAGHMGDERVTTLNLEIAAVDEERNLIMVRGAIPGAKNGLVLIRDAIKKARHADAPYPAATVAAAG</sequence>
<reference key="1">
    <citation type="journal article" date="2005" name="Nat. Biotechnol.">
        <title>Complete genome sequence of the acetic acid bacterium Gluconobacter oxydans.</title>
        <authorList>
            <person name="Prust C."/>
            <person name="Hoffmeister M."/>
            <person name="Liesegang H."/>
            <person name="Wiezer A."/>
            <person name="Fricke W.F."/>
            <person name="Ehrenreich A."/>
            <person name="Gottschalk G."/>
            <person name="Deppenmeier U."/>
        </authorList>
    </citation>
    <scope>NUCLEOTIDE SEQUENCE [LARGE SCALE GENOMIC DNA]</scope>
    <source>
        <strain>621H</strain>
    </source>
</reference>
<keyword id="KW-0488">Methylation</keyword>
<keyword id="KW-1185">Reference proteome</keyword>
<keyword id="KW-0687">Ribonucleoprotein</keyword>
<keyword id="KW-0689">Ribosomal protein</keyword>
<keyword id="KW-0694">RNA-binding</keyword>
<keyword id="KW-0699">rRNA-binding</keyword>
<name>RL3_GLUOX</name>
<feature type="chain" id="PRO_0000241350" description="Large ribosomal subunit protein uL3">
    <location>
        <begin position="1"/>
        <end position="227"/>
    </location>
</feature>
<feature type="modified residue" description="N5-methylglutamine" evidence="1">
    <location>
        <position position="151"/>
    </location>
</feature>
<proteinExistence type="inferred from homology"/>
<accession>Q5FTY3</accession>
<gene>
    <name evidence="1" type="primary">rplC</name>
    <name type="ordered locus">GOX0380</name>
</gene>